<gene>
    <name type="primary">mhr1</name>
    <name type="ORF">NCU00103</name>
</gene>
<protein>
    <recommendedName>
        <fullName evidence="5">Large ribosomal subunit protein mL67</fullName>
    </recommendedName>
</protein>
<accession>Q7RYM5</accession>
<feature type="chain" id="PRO_0000451731" description="Large ribosomal subunit protein mL67">
    <location>
        <begin position="1"/>
        <end position="292"/>
    </location>
</feature>
<feature type="region of interest" description="Disordered" evidence="2">
    <location>
        <begin position="59"/>
        <end position="83"/>
    </location>
</feature>
<sequence length="292" mass="32457">MNSVTTSTIGRLAFGVSRLSAVTNVAGAVRHASTHPTTAIPKPTTAVLKTSPLAEETAVELKSPSRLQLKSEPGNKGNPKGHGDRIWAFHHIEQGQVIYSTKPVISHQHLIRQQPFTGKNLVPRKIRKDYWRPLAMIELAGKDQGAVGRSVYQKLREFKKRHELDWANEAEEGRKLMHKSKRERGQELNDQKPNSVADMAAVLAGAGKGNLMWQVSRLGSSSELVGEIKKASGAVEKGAVVDVKRQLRRATVYWTNEQDKFHAREWSDNVSHEVGIPGEAEKKRMPIRMSSE</sequence>
<comment type="function">
    <text evidence="1 7">Component of the mitochondrial ribosome (mitoribosome), a dedicated translation machinery responsible for the synthesis of mitochondrial genome-encoded proteins, including at least some of the essential transmembrane subunits of the mitochondrial respiratory chain. The mitoribosomes are attached to the mitochondrial inner membrane and translation products are cotranslationally integrated into the membrane (Probable). mL67/MHR1 also has extraribosomal functions, being involved in regulation of mitochondrial DNA recombination, maintenance and repair, and generation of homoplasmic cells. mL67/MHR1 also acts as a transcription factor involved in regulation of RNA polymerase II-dependent transcription (By similarity).</text>
</comment>
<comment type="subunit">
    <text evidence="3 4">Component of the mitochondrial large ribosomal subunit (mt-LSU). Mature N.crassa 74S mitochondrial ribosomes consist of a small (37S) and a large (54S) subunit. The 37S small subunit contains a 16S ribosomal RNA (16S mt-rRNA) and 32 different proteins. The 54S large subunit contains a 23S rRNA (23S mt-rRNA) and 42 different proteins.</text>
</comment>
<comment type="subcellular location">
    <subcellularLocation>
        <location evidence="3 4">Mitochondrion</location>
    </subcellularLocation>
</comment>
<comment type="similarity">
    <text evidence="6">Belongs to the mitochondrion-specific ribosomal protein mL67 family.</text>
</comment>
<proteinExistence type="evidence at protein level"/>
<keyword id="KW-0002">3D-structure</keyword>
<keyword id="KW-0496">Mitochondrion</keyword>
<keyword id="KW-1185">Reference proteome</keyword>
<keyword id="KW-0687">Ribonucleoprotein</keyword>
<keyword id="KW-0689">Ribosomal protein</keyword>
<keyword id="KW-0804">Transcription</keyword>
<keyword id="KW-0805">Transcription regulation</keyword>
<name>MHR1_NEUCR</name>
<reference key="1">
    <citation type="journal article" date="2003" name="Nature">
        <title>The genome sequence of the filamentous fungus Neurospora crassa.</title>
        <authorList>
            <person name="Galagan J.E."/>
            <person name="Calvo S.E."/>
            <person name="Borkovich K.A."/>
            <person name="Selker E.U."/>
            <person name="Read N.D."/>
            <person name="Jaffe D.B."/>
            <person name="FitzHugh W."/>
            <person name="Ma L.-J."/>
            <person name="Smirnov S."/>
            <person name="Purcell S."/>
            <person name="Rehman B."/>
            <person name="Elkins T."/>
            <person name="Engels R."/>
            <person name="Wang S."/>
            <person name="Nielsen C.B."/>
            <person name="Butler J."/>
            <person name="Endrizzi M."/>
            <person name="Qui D."/>
            <person name="Ianakiev P."/>
            <person name="Bell-Pedersen D."/>
            <person name="Nelson M.A."/>
            <person name="Werner-Washburne M."/>
            <person name="Selitrennikoff C.P."/>
            <person name="Kinsey J.A."/>
            <person name="Braun E.L."/>
            <person name="Zelter A."/>
            <person name="Schulte U."/>
            <person name="Kothe G.O."/>
            <person name="Jedd G."/>
            <person name="Mewes H.-W."/>
            <person name="Staben C."/>
            <person name="Marcotte E."/>
            <person name="Greenberg D."/>
            <person name="Roy A."/>
            <person name="Foley K."/>
            <person name="Naylor J."/>
            <person name="Stange-Thomann N."/>
            <person name="Barrett R."/>
            <person name="Gnerre S."/>
            <person name="Kamal M."/>
            <person name="Kamvysselis M."/>
            <person name="Mauceli E.W."/>
            <person name="Bielke C."/>
            <person name="Rudd S."/>
            <person name="Frishman D."/>
            <person name="Krystofova S."/>
            <person name="Rasmussen C."/>
            <person name="Metzenberg R.L."/>
            <person name="Perkins D.D."/>
            <person name="Kroken S."/>
            <person name="Cogoni C."/>
            <person name="Macino G."/>
            <person name="Catcheside D.E.A."/>
            <person name="Li W."/>
            <person name="Pratt R.J."/>
            <person name="Osmani S.A."/>
            <person name="DeSouza C.P.C."/>
            <person name="Glass N.L."/>
            <person name="Orbach M.J."/>
            <person name="Berglund J.A."/>
            <person name="Voelker R."/>
            <person name="Yarden O."/>
            <person name="Plamann M."/>
            <person name="Seiler S."/>
            <person name="Dunlap J.C."/>
            <person name="Radford A."/>
            <person name="Aramayo R."/>
            <person name="Natvig D.O."/>
            <person name="Alex L.A."/>
            <person name="Mannhaupt G."/>
            <person name="Ebbole D.J."/>
            <person name="Freitag M."/>
            <person name="Paulsen I."/>
            <person name="Sachs M.S."/>
            <person name="Lander E.S."/>
            <person name="Nusbaum C."/>
            <person name="Birren B.W."/>
        </authorList>
    </citation>
    <scope>NUCLEOTIDE SEQUENCE [LARGE SCALE GENOMIC DNA]</scope>
    <source>
        <strain>ATCC 24698 / 74-OR23-1A / CBS 708.71 / DSM 1257 / FGSC 987</strain>
    </source>
</reference>
<reference key="2">
    <citation type="journal article" date="2006" name="FEMS Microbiol. Lett.">
        <title>Identification and comparative analysis of the large subunit mitochondrial ribosomal proteins of Neurospora crassa.</title>
        <authorList>
            <person name="Gan X."/>
            <person name="Arita K."/>
            <person name="Isono S."/>
            <person name="Kitakawa M."/>
            <person name="Yoshino K."/>
            <person name="Yonezawa K."/>
            <person name="Kato A."/>
            <person name="Inoue H."/>
            <person name="Isono K."/>
        </authorList>
    </citation>
    <scope>IDENTIFICATION IN THE MITOCHONDRIAL RIBOSOMAL LARGE COMPLEX</scope>
    <scope>IDENTIFICATION BY MASS SPECTROMETRY</scope>
</reference>
<reference evidence="8 9 10" key="3">
    <citation type="journal article" date="2020" name="Nat. Commun.">
        <title>Analysis of translating mitoribosome reveals functional characteristics of translation in mitochondria of fungi.</title>
        <authorList>
            <person name="Itoh Y."/>
            <person name="Naschberger A."/>
            <person name="Mortezaei N."/>
            <person name="Herrmann J.M."/>
            <person name="Amunts A."/>
        </authorList>
    </citation>
    <scope>STRUCTURE BY ELECTRON MICROSCOPY (2.74 ANGSTROMS)</scope>
</reference>
<evidence type="ECO:0000250" key="1">
    <source>
        <dbReference type="UniProtKB" id="Q06630"/>
    </source>
</evidence>
<evidence type="ECO:0000256" key="2">
    <source>
        <dbReference type="SAM" id="MobiDB-lite"/>
    </source>
</evidence>
<evidence type="ECO:0000269" key="3">
    <source>
    </source>
</evidence>
<evidence type="ECO:0000269" key="4">
    <source>
    </source>
</evidence>
<evidence type="ECO:0000303" key="5">
    <source>
    </source>
</evidence>
<evidence type="ECO:0000305" key="6"/>
<evidence type="ECO:0000305" key="7">
    <source>
    </source>
</evidence>
<evidence type="ECO:0007744" key="8">
    <source>
        <dbReference type="PDB" id="6YWS"/>
    </source>
</evidence>
<evidence type="ECO:0007744" key="9">
    <source>
        <dbReference type="PDB" id="6YWV"/>
    </source>
</evidence>
<evidence type="ECO:0007744" key="10">
    <source>
        <dbReference type="PDB" id="6YWX"/>
    </source>
</evidence>
<dbReference type="EMBL" id="CM002238">
    <property type="protein sequence ID" value="EAA27991.1"/>
    <property type="molecule type" value="Genomic_DNA"/>
</dbReference>
<dbReference type="RefSeq" id="XP_957227.1">
    <property type="nucleotide sequence ID" value="XM_952134.2"/>
</dbReference>
<dbReference type="PDB" id="6YWS">
    <property type="method" value="EM"/>
    <property type="resolution" value="2.74 A"/>
    <property type="chains" value="d=1-292"/>
</dbReference>
<dbReference type="PDB" id="6YWV">
    <property type="method" value="EM"/>
    <property type="resolution" value="3.03 A"/>
    <property type="chains" value="d=1-292"/>
</dbReference>
<dbReference type="PDB" id="6YWX">
    <property type="method" value="EM"/>
    <property type="resolution" value="3.10 A"/>
    <property type="chains" value="d=1-292"/>
</dbReference>
<dbReference type="PDBsum" id="6YWS"/>
<dbReference type="PDBsum" id="6YWV"/>
<dbReference type="PDBsum" id="6YWX"/>
<dbReference type="EMDB" id="EMD-10973"/>
<dbReference type="EMDB" id="EMD-10977"/>
<dbReference type="EMDB" id="EMD-10978"/>
<dbReference type="SMR" id="Q7RYM5"/>
<dbReference type="STRING" id="367110.Q7RYM5"/>
<dbReference type="PaxDb" id="5141-EFNCRP00000000457"/>
<dbReference type="EnsemblFungi" id="EAA27991">
    <property type="protein sequence ID" value="EAA27991"/>
    <property type="gene ID" value="NCU00103"/>
</dbReference>
<dbReference type="GeneID" id="3873390"/>
<dbReference type="KEGG" id="ncr:NCU00103"/>
<dbReference type="VEuPathDB" id="FungiDB:NCU00103"/>
<dbReference type="HOGENOM" id="CLU_052835_1_0_1"/>
<dbReference type="InParanoid" id="Q7RYM5"/>
<dbReference type="OrthoDB" id="5333655at2759"/>
<dbReference type="Proteomes" id="UP000001805">
    <property type="component" value="Chromosome 3, Linkage Group III"/>
</dbReference>
<dbReference type="GO" id="GO:0005739">
    <property type="term" value="C:mitochondrion"/>
    <property type="evidence" value="ECO:0000318"/>
    <property type="project" value="GO_Central"/>
</dbReference>
<dbReference type="GO" id="GO:1990904">
    <property type="term" value="C:ribonucleoprotein complex"/>
    <property type="evidence" value="ECO:0007669"/>
    <property type="project" value="UniProtKB-KW"/>
</dbReference>
<dbReference type="GO" id="GO:0005840">
    <property type="term" value="C:ribosome"/>
    <property type="evidence" value="ECO:0007669"/>
    <property type="project" value="UniProtKB-KW"/>
</dbReference>
<dbReference type="GO" id="GO:0000150">
    <property type="term" value="F:DNA strand exchange activity"/>
    <property type="evidence" value="ECO:0007669"/>
    <property type="project" value="InterPro"/>
</dbReference>
<dbReference type="GO" id="GO:0003697">
    <property type="term" value="F:single-stranded DNA binding"/>
    <property type="evidence" value="ECO:0007669"/>
    <property type="project" value="InterPro"/>
</dbReference>
<dbReference type="GO" id="GO:0003735">
    <property type="term" value="F:structural constituent of ribosome"/>
    <property type="evidence" value="ECO:0000318"/>
    <property type="project" value="GO_Central"/>
</dbReference>
<dbReference type="GO" id="GO:0000002">
    <property type="term" value="P:mitochondrial genome maintenance"/>
    <property type="evidence" value="ECO:0007669"/>
    <property type="project" value="InterPro"/>
</dbReference>
<dbReference type="InterPro" id="IPR024629">
    <property type="entry name" value="Ribosomal_mL67"/>
</dbReference>
<dbReference type="PANTHER" id="PTHR28184:SF1">
    <property type="entry name" value="LARGE RIBOSOMAL SUBUNIT PROTEIN ML67"/>
    <property type="match status" value="1"/>
</dbReference>
<dbReference type="PANTHER" id="PTHR28184">
    <property type="entry name" value="MITOCHONDRIAL HOMOLOGOUS RECOMBINATION PROTEIN 1"/>
    <property type="match status" value="1"/>
</dbReference>
<dbReference type="Pfam" id="PF12829">
    <property type="entry name" value="Mhr1"/>
    <property type="match status" value="1"/>
</dbReference>
<organism>
    <name type="scientific">Neurospora crassa (strain ATCC 24698 / 74-OR23-1A / CBS 708.71 / DSM 1257 / FGSC 987)</name>
    <dbReference type="NCBI Taxonomy" id="367110"/>
    <lineage>
        <taxon>Eukaryota</taxon>
        <taxon>Fungi</taxon>
        <taxon>Dikarya</taxon>
        <taxon>Ascomycota</taxon>
        <taxon>Pezizomycotina</taxon>
        <taxon>Sordariomycetes</taxon>
        <taxon>Sordariomycetidae</taxon>
        <taxon>Sordariales</taxon>
        <taxon>Sordariaceae</taxon>
        <taxon>Neurospora</taxon>
    </lineage>
</organism>